<evidence type="ECO:0000255" key="1">
    <source>
        <dbReference type="HAMAP-Rule" id="MF_00530"/>
    </source>
</evidence>
<gene>
    <name evidence="1" type="primary">atpC</name>
    <name type="ordered locus">CLD_0628</name>
</gene>
<name>ATPE_CLOBK</name>
<protein>
    <recommendedName>
        <fullName evidence="1">ATP synthase epsilon chain</fullName>
    </recommendedName>
    <alternativeName>
        <fullName evidence="1">ATP synthase F1 sector epsilon subunit</fullName>
    </alternativeName>
    <alternativeName>
        <fullName evidence="1">F-ATPase epsilon subunit</fullName>
    </alternativeName>
</protein>
<organism>
    <name type="scientific">Clostridium botulinum (strain Okra / Type B1)</name>
    <dbReference type="NCBI Taxonomy" id="498213"/>
    <lineage>
        <taxon>Bacteria</taxon>
        <taxon>Bacillati</taxon>
        <taxon>Bacillota</taxon>
        <taxon>Clostridia</taxon>
        <taxon>Eubacteriales</taxon>
        <taxon>Clostridiaceae</taxon>
        <taxon>Clostridium</taxon>
    </lineage>
</organism>
<proteinExistence type="inferred from homology"/>
<comment type="function">
    <text evidence="1">Produces ATP from ADP in the presence of a proton gradient across the membrane.</text>
</comment>
<comment type="subunit">
    <text evidence="1">F-type ATPases have 2 components, CF(1) - the catalytic core - and CF(0) - the membrane proton channel. CF(1) has five subunits: alpha(3), beta(3), gamma(1), delta(1), epsilon(1). CF(0) has three main subunits: a, b and c.</text>
</comment>
<comment type="subcellular location">
    <subcellularLocation>
        <location evidence="1">Cell membrane</location>
        <topology evidence="1">Peripheral membrane protein</topology>
    </subcellularLocation>
</comment>
<comment type="similarity">
    <text evidence="1">Belongs to the ATPase epsilon chain family.</text>
</comment>
<dbReference type="EMBL" id="CP000939">
    <property type="protein sequence ID" value="ACA46090.1"/>
    <property type="molecule type" value="Genomic_DNA"/>
</dbReference>
<dbReference type="RefSeq" id="WP_003356141.1">
    <property type="nucleotide sequence ID" value="NC_010516.1"/>
</dbReference>
<dbReference type="SMR" id="B1IE35"/>
<dbReference type="KEGG" id="cbb:CLD_0628"/>
<dbReference type="HOGENOM" id="CLU_084338_1_1_9"/>
<dbReference type="Proteomes" id="UP000008541">
    <property type="component" value="Chromosome"/>
</dbReference>
<dbReference type="GO" id="GO:0005886">
    <property type="term" value="C:plasma membrane"/>
    <property type="evidence" value="ECO:0007669"/>
    <property type="project" value="UniProtKB-SubCell"/>
</dbReference>
<dbReference type="GO" id="GO:0045259">
    <property type="term" value="C:proton-transporting ATP synthase complex"/>
    <property type="evidence" value="ECO:0007669"/>
    <property type="project" value="UniProtKB-KW"/>
</dbReference>
<dbReference type="GO" id="GO:0005524">
    <property type="term" value="F:ATP binding"/>
    <property type="evidence" value="ECO:0007669"/>
    <property type="project" value="UniProtKB-UniRule"/>
</dbReference>
<dbReference type="GO" id="GO:0046933">
    <property type="term" value="F:proton-transporting ATP synthase activity, rotational mechanism"/>
    <property type="evidence" value="ECO:0007669"/>
    <property type="project" value="UniProtKB-UniRule"/>
</dbReference>
<dbReference type="CDD" id="cd12152">
    <property type="entry name" value="F1-ATPase_delta"/>
    <property type="match status" value="1"/>
</dbReference>
<dbReference type="Gene3D" id="1.20.5.440">
    <property type="entry name" value="ATP synthase delta/epsilon subunit, C-terminal domain"/>
    <property type="match status" value="1"/>
</dbReference>
<dbReference type="Gene3D" id="2.60.15.10">
    <property type="entry name" value="F0F1 ATP synthase delta/epsilon subunit, N-terminal"/>
    <property type="match status" value="1"/>
</dbReference>
<dbReference type="HAMAP" id="MF_00530">
    <property type="entry name" value="ATP_synth_epsil_bac"/>
    <property type="match status" value="1"/>
</dbReference>
<dbReference type="InterPro" id="IPR036794">
    <property type="entry name" value="ATP_F1_dsu/esu_C_sf"/>
</dbReference>
<dbReference type="InterPro" id="IPR001469">
    <property type="entry name" value="ATP_synth_F1_dsu/esu"/>
</dbReference>
<dbReference type="InterPro" id="IPR020546">
    <property type="entry name" value="ATP_synth_F1_dsu/esu_N"/>
</dbReference>
<dbReference type="InterPro" id="IPR020547">
    <property type="entry name" value="ATP_synth_F1_esu_C"/>
</dbReference>
<dbReference type="InterPro" id="IPR036771">
    <property type="entry name" value="ATPsynth_dsu/esu_N"/>
</dbReference>
<dbReference type="NCBIfam" id="TIGR01216">
    <property type="entry name" value="ATP_synt_epsi"/>
    <property type="match status" value="1"/>
</dbReference>
<dbReference type="NCBIfam" id="NF009984">
    <property type="entry name" value="PRK13450.1"/>
    <property type="match status" value="1"/>
</dbReference>
<dbReference type="PANTHER" id="PTHR13822">
    <property type="entry name" value="ATP SYNTHASE DELTA/EPSILON CHAIN"/>
    <property type="match status" value="1"/>
</dbReference>
<dbReference type="PANTHER" id="PTHR13822:SF10">
    <property type="entry name" value="ATP SYNTHASE EPSILON CHAIN, CHLOROPLASTIC"/>
    <property type="match status" value="1"/>
</dbReference>
<dbReference type="Pfam" id="PF00401">
    <property type="entry name" value="ATP-synt_DE"/>
    <property type="match status" value="1"/>
</dbReference>
<dbReference type="Pfam" id="PF02823">
    <property type="entry name" value="ATP-synt_DE_N"/>
    <property type="match status" value="1"/>
</dbReference>
<dbReference type="SUPFAM" id="SSF46604">
    <property type="entry name" value="Epsilon subunit of F1F0-ATP synthase C-terminal domain"/>
    <property type="match status" value="1"/>
</dbReference>
<dbReference type="SUPFAM" id="SSF51344">
    <property type="entry name" value="Epsilon subunit of F1F0-ATP synthase N-terminal domain"/>
    <property type="match status" value="1"/>
</dbReference>
<reference key="1">
    <citation type="journal article" date="2007" name="PLoS ONE">
        <title>Analysis of the neurotoxin complex genes in Clostridium botulinum A1-A4 and B1 strains: BoNT/A3, /Ba4 and /B1 clusters are located within plasmids.</title>
        <authorList>
            <person name="Smith T.J."/>
            <person name="Hill K.K."/>
            <person name="Foley B.T."/>
            <person name="Detter J.C."/>
            <person name="Munk A.C."/>
            <person name="Bruce D.C."/>
            <person name="Doggett N.A."/>
            <person name="Smith L.A."/>
            <person name="Marks J.D."/>
            <person name="Xie G."/>
            <person name="Brettin T.S."/>
        </authorList>
    </citation>
    <scope>NUCLEOTIDE SEQUENCE [LARGE SCALE GENOMIC DNA]</scope>
    <source>
        <strain>Okra / Type B1</strain>
    </source>
</reference>
<keyword id="KW-0066">ATP synthesis</keyword>
<keyword id="KW-1003">Cell membrane</keyword>
<keyword id="KW-0139">CF(1)</keyword>
<keyword id="KW-0375">Hydrogen ion transport</keyword>
<keyword id="KW-0406">Ion transport</keyword>
<keyword id="KW-0472">Membrane</keyword>
<keyword id="KW-0813">Transport</keyword>
<accession>B1IE35</accession>
<feature type="chain" id="PRO_1000127839" description="ATP synthase epsilon chain">
    <location>
        <begin position="1"/>
        <end position="133"/>
    </location>
</feature>
<sequence>MKDNIELTIFTPEKNIKIGEIKEVITEGLDGDLAILPNHVNMITYLKPTITKYIDLNGNKNNIFTSSGVLKVEDNKVYIICDASEKPEDIDIKRAENAKKRAEERLRNKKEIDVKRAELALFRSIARIKIKEL</sequence>